<protein>
    <recommendedName>
        <fullName evidence="1">Uracil phosphoribosyltransferase</fullName>
        <ecNumber evidence="1">2.4.2.9</ecNumber>
    </recommendedName>
    <alternativeName>
        <fullName evidence="1">UMP pyrophosphorylase</fullName>
    </alternativeName>
    <alternativeName>
        <fullName evidence="1">UPRTase</fullName>
    </alternativeName>
</protein>
<evidence type="ECO:0000255" key="1">
    <source>
        <dbReference type="HAMAP-Rule" id="MF_01218"/>
    </source>
</evidence>
<proteinExistence type="inferred from homology"/>
<reference key="1">
    <citation type="submission" date="2007-06" db="EMBL/GenBank/DDBJ databases">
        <title>Complete sequence of Methanococcus vannielii SB.</title>
        <authorList>
            <consortium name="US DOE Joint Genome Institute"/>
            <person name="Copeland A."/>
            <person name="Lucas S."/>
            <person name="Lapidus A."/>
            <person name="Barry K."/>
            <person name="Glavina del Rio T."/>
            <person name="Dalin E."/>
            <person name="Tice H."/>
            <person name="Pitluck S."/>
            <person name="Chain P."/>
            <person name="Malfatti S."/>
            <person name="Shin M."/>
            <person name="Vergez L."/>
            <person name="Schmutz J."/>
            <person name="Larimer F."/>
            <person name="Land M."/>
            <person name="Hauser L."/>
            <person name="Kyrpides N."/>
            <person name="Anderson I."/>
            <person name="Sieprawska-Lupa M."/>
            <person name="Whitman W.B."/>
            <person name="Richardson P."/>
        </authorList>
    </citation>
    <scope>NUCLEOTIDE SEQUENCE [LARGE SCALE GENOMIC DNA]</scope>
    <source>
        <strain>ATCC 35089 / DSM 1224 / JCM 13029 / OCM 148 / SB</strain>
    </source>
</reference>
<feature type="chain" id="PRO_1000053742" description="Uracil phosphoribosyltransferase">
    <location>
        <begin position="1"/>
        <end position="232"/>
    </location>
</feature>
<feature type="binding site" evidence="1">
    <location>
        <begin position="38"/>
        <end position="42"/>
    </location>
    <ligand>
        <name>GTP</name>
        <dbReference type="ChEBI" id="CHEBI:37565"/>
    </ligand>
</feature>
<feature type="binding site" evidence="1">
    <location>
        <position position="87"/>
    </location>
    <ligand>
        <name>5-phospho-alpha-D-ribose 1-diphosphate</name>
        <dbReference type="ChEBI" id="CHEBI:58017"/>
    </ligand>
</feature>
<feature type="binding site" evidence="1">
    <location>
        <position position="112"/>
    </location>
    <ligand>
        <name>5-phospho-alpha-D-ribose 1-diphosphate</name>
        <dbReference type="ChEBI" id="CHEBI:58017"/>
    </ligand>
</feature>
<feature type="binding site" evidence="1">
    <location>
        <begin position="140"/>
        <end position="148"/>
    </location>
    <ligand>
        <name>5-phospho-alpha-D-ribose 1-diphosphate</name>
        <dbReference type="ChEBI" id="CHEBI:58017"/>
    </ligand>
</feature>
<feature type="binding site" evidence="1">
    <location>
        <position position="204"/>
    </location>
    <ligand>
        <name>uracil</name>
        <dbReference type="ChEBI" id="CHEBI:17568"/>
    </ligand>
</feature>
<feature type="binding site" evidence="1">
    <location>
        <begin position="209"/>
        <end position="211"/>
    </location>
    <ligand>
        <name>uracil</name>
        <dbReference type="ChEBI" id="CHEBI:17568"/>
    </ligand>
</feature>
<feature type="binding site" evidence="1">
    <location>
        <position position="210"/>
    </location>
    <ligand>
        <name>5-phospho-alpha-D-ribose 1-diphosphate</name>
        <dbReference type="ChEBI" id="CHEBI:58017"/>
    </ligand>
</feature>
<name>UPP_METVS</name>
<accession>A6USD4</accession>
<sequence length="232" mass="26077">MIRDERWFGVYSFEDTPFLMETLTDLRNINTDNISFRKGLVRLGRYMGYELTKTMEFEKINITTPLEKTEGIISKDRKNVVIITILRAAFPLMEGLIKTLESAKVGIISASRGHAPKFNIEMNYVKVPRVTENDTIIIADPMIATGSTLINVLTELKKSEKSKRIVILGVLAAPEGIDSIKKAFPDVEIFVTKIDRELNKDGYIVPGLGDAGDRAFGEPFKVSLLPQMHNLE</sequence>
<keyword id="KW-0021">Allosteric enzyme</keyword>
<keyword id="KW-0328">Glycosyltransferase</keyword>
<keyword id="KW-0342">GTP-binding</keyword>
<keyword id="KW-0460">Magnesium</keyword>
<keyword id="KW-0547">Nucleotide-binding</keyword>
<keyword id="KW-0808">Transferase</keyword>
<organism>
    <name type="scientific">Methanococcus vannielii (strain ATCC 35089 / DSM 1224 / JCM 13029 / OCM 148 / SB)</name>
    <dbReference type="NCBI Taxonomy" id="406327"/>
    <lineage>
        <taxon>Archaea</taxon>
        <taxon>Methanobacteriati</taxon>
        <taxon>Methanobacteriota</taxon>
        <taxon>Methanomada group</taxon>
        <taxon>Methanococci</taxon>
        <taxon>Methanococcales</taxon>
        <taxon>Methanococcaceae</taxon>
        <taxon>Methanococcus</taxon>
    </lineage>
</organism>
<comment type="function">
    <text evidence="1">Catalyzes the conversion of uracil and 5-phospho-alpha-D-ribose 1-diphosphate (PRPP) to UMP and diphosphate.</text>
</comment>
<comment type="catalytic activity">
    <reaction evidence="1">
        <text>UMP + diphosphate = 5-phospho-alpha-D-ribose 1-diphosphate + uracil</text>
        <dbReference type="Rhea" id="RHEA:13017"/>
        <dbReference type="ChEBI" id="CHEBI:17568"/>
        <dbReference type="ChEBI" id="CHEBI:33019"/>
        <dbReference type="ChEBI" id="CHEBI:57865"/>
        <dbReference type="ChEBI" id="CHEBI:58017"/>
        <dbReference type="EC" id="2.4.2.9"/>
    </reaction>
</comment>
<comment type="cofactor">
    <cofactor evidence="1">
        <name>Mg(2+)</name>
        <dbReference type="ChEBI" id="CHEBI:18420"/>
    </cofactor>
    <text evidence="1">Binds 1 Mg(2+) ion per subunit. The magnesium is bound as Mg-PRPP.</text>
</comment>
<comment type="activity regulation">
    <text evidence="1">Allosterically activated by GTP.</text>
</comment>
<comment type="pathway">
    <text evidence="1">Pyrimidine metabolism; UMP biosynthesis via salvage pathway; UMP from uracil: step 1/1.</text>
</comment>
<comment type="similarity">
    <text evidence="1">Belongs to the UPRTase family.</text>
</comment>
<gene>
    <name evidence="1" type="primary">upp</name>
    <name type="ordered locus">Mevan_1512</name>
</gene>
<dbReference type="EC" id="2.4.2.9" evidence="1"/>
<dbReference type="EMBL" id="CP000742">
    <property type="protein sequence ID" value="ABR55406.1"/>
    <property type="molecule type" value="Genomic_DNA"/>
</dbReference>
<dbReference type="RefSeq" id="WP_012066320.1">
    <property type="nucleotide sequence ID" value="NC_009634.1"/>
</dbReference>
<dbReference type="SMR" id="A6USD4"/>
<dbReference type="STRING" id="406327.Mevan_1512"/>
<dbReference type="GeneID" id="5324622"/>
<dbReference type="KEGG" id="mvn:Mevan_1512"/>
<dbReference type="eggNOG" id="arCOG04128">
    <property type="taxonomic scope" value="Archaea"/>
</dbReference>
<dbReference type="HOGENOM" id="CLU_067096_2_0_2"/>
<dbReference type="OrthoDB" id="80352at2157"/>
<dbReference type="UniPathway" id="UPA00574">
    <property type="reaction ID" value="UER00636"/>
</dbReference>
<dbReference type="Proteomes" id="UP000001107">
    <property type="component" value="Chromosome"/>
</dbReference>
<dbReference type="GO" id="GO:0005525">
    <property type="term" value="F:GTP binding"/>
    <property type="evidence" value="ECO:0007669"/>
    <property type="project" value="UniProtKB-KW"/>
</dbReference>
<dbReference type="GO" id="GO:0000287">
    <property type="term" value="F:magnesium ion binding"/>
    <property type="evidence" value="ECO:0007669"/>
    <property type="project" value="UniProtKB-UniRule"/>
</dbReference>
<dbReference type="GO" id="GO:0004845">
    <property type="term" value="F:uracil phosphoribosyltransferase activity"/>
    <property type="evidence" value="ECO:0007669"/>
    <property type="project" value="UniProtKB-UniRule"/>
</dbReference>
<dbReference type="GO" id="GO:0044206">
    <property type="term" value="P:UMP salvage"/>
    <property type="evidence" value="ECO:0007669"/>
    <property type="project" value="UniProtKB-UniRule"/>
</dbReference>
<dbReference type="GO" id="GO:0006223">
    <property type="term" value="P:uracil salvage"/>
    <property type="evidence" value="ECO:0007669"/>
    <property type="project" value="InterPro"/>
</dbReference>
<dbReference type="CDD" id="cd06223">
    <property type="entry name" value="PRTases_typeI"/>
    <property type="match status" value="1"/>
</dbReference>
<dbReference type="Gene3D" id="3.40.50.2020">
    <property type="match status" value="1"/>
</dbReference>
<dbReference type="HAMAP" id="MF_01218_A">
    <property type="entry name" value="Upp_A"/>
    <property type="match status" value="1"/>
</dbReference>
<dbReference type="InterPro" id="IPR000836">
    <property type="entry name" value="PRibTrfase_dom"/>
</dbReference>
<dbReference type="InterPro" id="IPR029057">
    <property type="entry name" value="PRTase-like"/>
</dbReference>
<dbReference type="InterPro" id="IPR034331">
    <property type="entry name" value="Upp_A"/>
</dbReference>
<dbReference type="InterPro" id="IPR005765">
    <property type="entry name" value="Ura_phspho_trans"/>
</dbReference>
<dbReference type="NCBIfam" id="NF001097">
    <property type="entry name" value="PRK00129.1"/>
    <property type="match status" value="1"/>
</dbReference>
<dbReference type="NCBIfam" id="TIGR01091">
    <property type="entry name" value="upp"/>
    <property type="match status" value="1"/>
</dbReference>
<dbReference type="Pfam" id="PF14681">
    <property type="entry name" value="UPRTase"/>
    <property type="match status" value="1"/>
</dbReference>
<dbReference type="SUPFAM" id="SSF53271">
    <property type="entry name" value="PRTase-like"/>
    <property type="match status" value="1"/>
</dbReference>